<evidence type="ECO:0000250" key="1">
    <source>
        <dbReference type="UniProtKB" id="Q9LIS2"/>
    </source>
</evidence>
<evidence type="ECO:0000255" key="2">
    <source>
        <dbReference type="PROSITE-ProRule" id="PRU00176"/>
    </source>
</evidence>
<evidence type="ECO:0000256" key="3">
    <source>
        <dbReference type="SAM" id="MobiDB-lite"/>
    </source>
</evidence>
<evidence type="ECO:0000269" key="4">
    <source>
    </source>
</evidence>
<evidence type="ECO:0000303" key="5">
    <source>
    </source>
</evidence>
<evidence type="ECO:0000305" key="6"/>
<evidence type="ECO:0000305" key="7">
    <source>
    </source>
</evidence>
<evidence type="ECO:0000312" key="8">
    <source>
        <dbReference type="EMBL" id="KGN61792.1"/>
    </source>
</evidence>
<organism>
    <name type="scientific">Cucumis sativus</name>
    <name type="common">Cucumber</name>
    <dbReference type="NCBI Taxonomy" id="3659"/>
    <lineage>
        <taxon>Eukaryota</taxon>
        <taxon>Viridiplantae</taxon>
        <taxon>Streptophyta</taxon>
        <taxon>Embryophyta</taxon>
        <taxon>Tracheophyta</taxon>
        <taxon>Spermatophyta</taxon>
        <taxon>Magnoliopsida</taxon>
        <taxon>eudicotyledons</taxon>
        <taxon>Gunneridae</taxon>
        <taxon>Pentapetalae</taxon>
        <taxon>rosids</taxon>
        <taxon>fabids</taxon>
        <taxon>Cucurbitales</taxon>
        <taxon>Cucurbitaceae</taxon>
        <taxon>Benincaseae</taxon>
        <taxon>Cucumis</taxon>
    </lineage>
</organism>
<gene>
    <name evidence="5" type="primary">SRBP1</name>
    <name evidence="8" type="ORF">Csa_2G247040</name>
</gene>
<reference key="1">
    <citation type="journal article" date="2020" name="Mol. Plant">
        <title>A plant SMALL RNA-BINDING PROTEIN 1 family mediates cell-to-cell trafficking of RNAi signals.</title>
        <authorList>
            <person name="Yan Y."/>
            <person name="Ham B.-K."/>
            <person name="Chong Y.H."/>
            <person name="Yeh S.-D."/>
            <person name="Lucas W.J."/>
        </authorList>
    </citation>
    <scope>NUCLEOTIDE SEQUENCE [MRNA]</scope>
    <scope>FUNCTION</scope>
    <scope>TISSUE SPECIFICITY</scope>
    <scope>SUBCELLULAR LOCATION</scope>
    <scope>DOMAIN</scope>
    <scope>SUBUNIT</scope>
    <scope>GENE FAMILY</scope>
    <source>
        <strain>cv. 9930 Chinese long</strain>
    </source>
</reference>
<reference key="2">
    <citation type="journal article" date="2009" name="Nat. Genet.">
        <title>The genome of the cucumber, Cucumis sativus L.</title>
        <authorList>
            <person name="Huang S."/>
            <person name="Li R."/>
            <person name="Zhang Z."/>
            <person name="Li L."/>
            <person name="Gu X."/>
            <person name="Fan W."/>
            <person name="Lucas W.J."/>
            <person name="Wang X."/>
            <person name="Xie B."/>
            <person name="Ni P."/>
            <person name="Ren Y."/>
            <person name="Zhu H."/>
            <person name="Li J."/>
            <person name="Lin K."/>
            <person name="Jin W."/>
            <person name="Fei Z."/>
            <person name="Li G."/>
            <person name="Staub J."/>
            <person name="Kilian A."/>
            <person name="van der Vossen E.A."/>
            <person name="Wu Y."/>
            <person name="Guo J."/>
            <person name="He J."/>
            <person name="Jia Z."/>
            <person name="Ren Y."/>
            <person name="Tian G."/>
            <person name="Lu Y."/>
            <person name="Ruan J."/>
            <person name="Qian W."/>
            <person name="Wang M."/>
            <person name="Huang Q."/>
            <person name="Li B."/>
            <person name="Xuan Z."/>
            <person name="Cao J."/>
            <person name="Asan X."/>
            <person name="Wu Z."/>
            <person name="Zhang J."/>
            <person name="Cai Q."/>
            <person name="Bai Y."/>
            <person name="Zhao B."/>
            <person name="Han Y."/>
            <person name="Li Y."/>
            <person name="Li X."/>
            <person name="Wang S."/>
            <person name="Shi Q."/>
            <person name="Liu S."/>
            <person name="Cho W.K."/>
            <person name="Kim J.Y."/>
            <person name="Xu Y."/>
            <person name="Heller-Uszynska K."/>
            <person name="Miao H."/>
            <person name="Cheng Z."/>
            <person name="Zhang S."/>
            <person name="Wu J."/>
            <person name="Yang Y."/>
            <person name="Kang H."/>
            <person name="Li M."/>
            <person name="Liang H."/>
            <person name="Ren X."/>
            <person name="Shi Z."/>
            <person name="Wen M."/>
            <person name="Jian M."/>
            <person name="Yang H."/>
            <person name="Zhang G."/>
            <person name="Yang Z."/>
            <person name="Chen R."/>
            <person name="Liu S."/>
            <person name="Li J."/>
            <person name="Ma L."/>
            <person name="Liu H."/>
            <person name="Zhou Y."/>
            <person name="Zhao J."/>
            <person name="Fang X."/>
            <person name="Li G."/>
            <person name="Fang L."/>
            <person name="Li Y."/>
            <person name="Liu D."/>
            <person name="Zheng H."/>
            <person name="Zhang Y."/>
            <person name="Qin N."/>
            <person name="Li Z."/>
            <person name="Yang G."/>
            <person name="Yang S."/>
            <person name="Bolund L."/>
            <person name="Kristiansen K."/>
            <person name="Zheng H."/>
            <person name="Li S."/>
            <person name="Zhang X."/>
            <person name="Yang H."/>
            <person name="Wang J."/>
            <person name="Sun R."/>
            <person name="Zhang B."/>
            <person name="Jiang S."/>
            <person name="Wang J."/>
            <person name="Du Y."/>
            <person name="Li S."/>
        </authorList>
    </citation>
    <scope>NUCLEOTIDE SEQUENCE [LARGE SCALE GENOMIC DNA]</scope>
    <source>
        <strain>cv. 9930</strain>
    </source>
</reference>
<keyword id="KW-0611">Plant defense</keyword>
<keyword id="KW-1185">Reference proteome</keyword>
<keyword id="KW-0694">RNA-binding</keyword>
<keyword id="KW-0964">Secreted</keyword>
<dbReference type="EMBL" id="MN064662">
    <property type="protein sequence ID" value="QGZ19397.1"/>
    <property type="molecule type" value="mRNA"/>
</dbReference>
<dbReference type="EMBL" id="CM002923">
    <property type="protein sequence ID" value="KGN61792.1"/>
    <property type="molecule type" value="Genomic_DNA"/>
</dbReference>
<dbReference type="SMR" id="A0A0A0LLY1"/>
<dbReference type="STRING" id="3659.A0A0A0LLY1"/>
<dbReference type="EnsemblPlants" id="KGN61792">
    <property type="protein sequence ID" value="KGN61792"/>
    <property type="gene ID" value="Csa_2G247040"/>
</dbReference>
<dbReference type="Gramene" id="KGN61792">
    <property type="protein sequence ID" value="KGN61792"/>
    <property type="gene ID" value="Csa_2G247040"/>
</dbReference>
<dbReference type="eggNOG" id="KOG0118">
    <property type="taxonomic scope" value="Eukaryota"/>
</dbReference>
<dbReference type="OMA" id="VIEYRCF"/>
<dbReference type="Proteomes" id="UP000029981">
    <property type="component" value="Chromosome 2"/>
</dbReference>
<dbReference type="GO" id="GO:0005615">
    <property type="term" value="C:extracellular space"/>
    <property type="evidence" value="ECO:0000314"/>
    <property type="project" value="UniProtKB"/>
</dbReference>
<dbReference type="GO" id="GO:0035198">
    <property type="term" value="F:miRNA binding"/>
    <property type="evidence" value="ECO:0000314"/>
    <property type="project" value="UniProtKB"/>
</dbReference>
<dbReference type="GO" id="GO:0003729">
    <property type="term" value="F:mRNA binding"/>
    <property type="evidence" value="ECO:0000318"/>
    <property type="project" value="GO_Central"/>
</dbReference>
<dbReference type="GO" id="GO:0003727">
    <property type="term" value="F:single-stranded RNA binding"/>
    <property type="evidence" value="ECO:0000314"/>
    <property type="project" value="UniProtKB"/>
</dbReference>
<dbReference type="GO" id="GO:0035197">
    <property type="term" value="F:siRNA binding"/>
    <property type="evidence" value="ECO:0000314"/>
    <property type="project" value="UniProtKB"/>
</dbReference>
<dbReference type="GO" id="GO:0006952">
    <property type="term" value="P:defense response"/>
    <property type="evidence" value="ECO:0007669"/>
    <property type="project" value="UniProtKB-KW"/>
</dbReference>
<dbReference type="GO" id="GO:0006858">
    <property type="term" value="P:extracellular transport"/>
    <property type="evidence" value="ECO:0000314"/>
    <property type="project" value="UniProtKB"/>
</dbReference>
<dbReference type="GO" id="GO:1990428">
    <property type="term" value="P:miRNA transport"/>
    <property type="evidence" value="ECO:0000314"/>
    <property type="project" value="UniProtKB"/>
</dbReference>
<dbReference type="GO" id="GO:0050688">
    <property type="term" value="P:regulation of defense response to virus"/>
    <property type="evidence" value="ECO:0000314"/>
    <property type="project" value="UniProtKB"/>
</dbReference>
<dbReference type="GO" id="GO:0050658">
    <property type="term" value="P:RNA transport"/>
    <property type="evidence" value="ECO:0000314"/>
    <property type="project" value="UniProtKB"/>
</dbReference>
<dbReference type="CDD" id="cd21608">
    <property type="entry name" value="RRM2_NsCP33_like"/>
    <property type="match status" value="1"/>
</dbReference>
<dbReference type="Gene3D" id="3.30.70.330">
    <property type="match status" value="1"/>
</dbReference>
<dbReference type="InterPro" id="IPR012677">
    <property type="entry name" value="Nucleotide-bd_a/b_plait_sf"/>
</dbReference>
<dbReference type="InterPro" id="IPR035979">
    <property type="entry name" value="RBD_domain_sf"/>
</dbReference>
<dbReference type="InterPro" id="IPR048289">
    <property type="entry name" value="RRM2_NsCP33-like"/>
</dbReference>
<dbReference type="InterPro" id="IPR000504">
    <property type="entry name" value="RRM_dom"/>
</dbReference>
<dbReference type="InterPro" id="IPR052462">
    <property type="entry name" value="SLIRP/GR-RBP-like"/>
</dbReference>
<dbReference type="PANTHER" id="PTHR48027">
    <property type="entry name" value="HETEROGENEOUS NUCLEAR RIBONUCLEOPROTEIN 87F-RELATED"/>
    <property type="match status" value="1"/>
</dbReference>
<dbReference type="Pfam" id="PF00076">
    <property type="entry name" value="RRM_1"/>
    <property type="match status" value="1"/>
</dbReference>
<dbReference type="SMART" id="SM00360">
    <property type="entry name" value="RRM"/>
    <property type="match status" value="1"/>
</dbReference>
<dbReference type="SUPFAM" id="SSF54928">
    <property type="entry name" value="RNA-binding domain, RBD"/>
    <property type="match status" value="1"/>
</dbReference>
<dbReference type="PROSITE" id="PS50102">
    <property type="entry name" value="RRM"/>
    <property type="match status" value="1"/>
</dbReference>
<name>SRBP1_CUCSA</name>
<protein>
    <recommendedName>
        <fullName evidence="5">Small RNA binding protein 1</fullName>
        <shortName evidence="5">CsSRBP1</shortName>
    </recommendedName>
</protein>
<accession>A0A0A0LLY1</accession>
<comment type="function">
    <text evidence="1 4">Possibly has a role in RNA transcription or processing during stress (By similarity). Binds sequence non-specifically to RNAs and DNAs (By similarity). Mediates cell-to-cell trafficking of RNA interference (RNAi) signals (small RNAs (sRNA), e.g. small interfering RNA (siRNA) and microRNA (miRNA)) which regulate growth and development, as well as responses to environmental inputs, including pathogen attack; can compromise zucchini yellow mosaic virus (ZYMV) and tobacco rattle virus (TRV) infections at the early stage (PubMed:31812689).</text>
</comment>
<comment type="subunit">
    <text evidence="4">Binds to small phloem-mobile single-stranded RNAs (ss-sRNA, e.g. small interfering RNA (siRNA) and microRNA (miRNA)) in the phloeme exudate, including viral-derived sRNA (vsiRNA).</text>
</comment>
<comment type="subcellular location">
    <subcellularLocation>
        <location evidence="4">Secreted</location>
    </subcellularLocation>
    <text evidence="4">Observed in the phloem translocation stream.</text>
</comment>
<comment type="tissue specificity">
    <text evidence="4">Accumulates in phloem exudates.</text>
</comment>
<comment type="domain">
    <text evidence="4">The glycine-rich (GR) domain is necessary and sufficient for cell-to-cell movement and to interefere with zucchini yellow mosaic virus (ZYMV) infection.</text>
</comment>
<comment type="similarity">
    <text evidence="6">Belongs to the GR-RBP family.</text>
</comment>
<proteinExistence type="evidence at protein level"/>
<feature type="chain" id="PRO_0000454536" description="Small RNA binding protein 1">
    <location>
        <begin position="1"/>
        <end position="160"/>
    </location>
</feature>
<feature type="domain" description="RRM" evidence="2">
    <location>
        <begin position="8"/>
        <end position="86"/>
    </location>
</feature>
<feature type="region of interest" description="Disordered" evidence="3">
    <location>
        <begin position="82"/>
        <end position="160"/>
    </location>
</feature>
<feature type="region of interest" description="Glycine-rich (GR) required for cell-to-cell movement" evidence="7">
    <location>
        <begin position="88"/>
        <end position="157"/>
    </location>
</feature>
<feature type="compositionally biased region" description="Gly residues" evidence="3">
    <location>
        <begin position="87"/>
        <end position="160"/>
    </location>
</feature>
<sequence length="160" mass="15973">MASSSVEFRCFVGGLAWATDSNSLEKAFSVYGEIVEAKIVSDRETGRSRGFGFVTFLEEEAMRSAIEAMNGHILDGRNITVNEAQQRGGGGGGGYNRGGGYGGRRDGGGFSRGGGGGYGGGGGGGYGGGRDRGYGGGGGYGGGRDSRGSGGGGSEGGWRN</sequence>